<proteinExistence type="evidence at protein level"/>
<feature type="transit peptide" description="Mitochondrion" evidence="2">
    <location>
        <begin position="1"/>
        <end position="32"/>
    </location>
</feature>
<feature type="chain" id="PRO_0000421457" description="Probable acyl-[acyl-carrier-protein]--UDP-N-acetylglucosamine O-acyltransferase, mitochondrial">
    <location>
        <begin position="33"/>
        <end position="336"/>
    </location>
</feature>
<feature type="binding site" evidence="1">
    <location>
        <begin position="128"/>
        <end position="131"/>
    </location>
    <ligand>
        <name>substrate</name>
    </ligand>
</feature>
<feature type="binding site" evidence="1">
    <location>
        <position position="180"/>
    </location>
    <ligand>
        <name>substrate</name>
    </ligand>
</feature>
<feature type="binding site" evidence="1">
    <location>
        <position position="199"/>
    </location>
    <ligand>
        <name>substrate</name>
    </ligand>
</feature>
<feature type="binding site" evidence="1">
    <location>
        <position position="216"/>
    </location>
    <ligand>
        <name>substrate</name>
    </ligand>
</feature>
<feature type="splice variant" id="VSP_045743" description="In isoform 2." evidence="5">
    <location>
        <begin position="296"/>
        <end position="297"/>
    </location>
</feature>
<feature type="strand" evidence="7">
    <location>
        <begin position="45"/>
        <end position="47"/>
    </location>
</feature>
<feature type="strand" evidence="7">
    <location>
        <begin position="51"/>
        <end position="53"/>
    </location>
</feature>
<feature type="strand" evidence="7">
    <location>
        <begin position="69"/>
        <end position="71"/>
    </location>
</feature>
<feature type="strand" evidence="7">
    <location>
        <begin position="85"/>
        <end position="89"/>
    </location>
</feature>
<feature type="strand" evidence="7">
    <location>
        <begin position="104"/>
        <end position="111"/>
    </location>
</feature>
<feature type="strand" evidence="7">
    <location>
        <begin position="122"/>
        <end position="125"/>
    </location>
</feature>
<feature type="strand" evidence="7">
    <location>
        <begin position="138"/>
        <end position="142"/>
    </location>
</feature>
<feature type="strand" evidence="7">
    <location>
        <begin position="153"/>
        <end position="155"/>
    </location>
</feature>
<feature type="strand" evidence="7">
    <location>
        <begin position="164"/>
        <end position="166"/>
    </location>
</feature>
<feature type="strand" evidence="7">
    <location>
        <begin position="234"/>
        <end position="236"/>
    </location>
</feature>
<feature type="strand" evidence="7">
    <location>
        <begin position="240"/>
        <end position="243"/>
    </location>
</feature>
<feature type="strand" evidence="7">
    <location>
        <begin position="248"/>
        <end position="252"/>
    </location>
</feature>
<feature type="helix" evidence="7">
    <location>
        <begin position="254"/>
        <end position="259"/>
    </location>
</feature>
<feature type="helix" evidence="7">
    <location>
        <begin position="264"/>
        <end position="278"/>
    </location>
</feature>
<feature type="helix" evidence="7">
    <location>
        <begin position="289"/>
        <end position="297"/>
    </location>
</feature>
<feature type="helix" evidence="7">
    <location>
        <begin position="299"/>
        <end position="302"/>
    </location>
</feature>
<feature type="helix" evidence="7">
    <location>
        <begin position="305"/>
        <end position="316"/>
    </location>
</feature>
<accession>Q9SU91</accession>
<accession>Q8H1Q9</accession>
<organism>
    <name type="scientific">Arabidopsis thaliana</name>
    <name type="common">Mouse-ear cress</name>
    <dbReference type="NCBI Taxonomy" id="3702"/>
    <lineage>
        <taxon>Eukaryota</taxon>
        <taxon>Viridiplantae</taxon>
        <taxon>Streptophyta</taxon>
        <taxon>Embryophyta</taxon>
        <taxon>Tracheophyta</taxon>
        <taxon>Spermatophyta</taxon>
        <taxon>Magnoliopsida</taxon>
        <taxon>eudicotyledons</taxon>
        <taxon>Gunneridae</taxon>
        <taxon>Pentapetalae</taxon>
        <taxon>rosids</taxon>
        <taxon>malvids</taxon>
        <taxon>Brassicales</taxon>
        <taxon>Brassicaceae</taxon>
        <taxon>Camelineae</taxon>
        <taxon>Arabidopsis</taxon>
    </lineage>
</organism>
<comment type="function">
    <text evidence="6">Involved in the biosynthesis of lipid A, a phosphorylated glycolipid that in bacteria anchors the lipopolysaccharide to the outer membrane of the cell. Lipid A-like molecules in plants may serve as structural components of the outer membranes of mitochondria and/or chloroplasts, or may be involved in signal transduction or plant defense responses (Potential).</text>
</comment>
<comment type="catalytic activity">
    <reaction evidence="4">
        <text>a (3R)-hydroxyacyl-[ACP] + UDP-N-acetyl-alpha-D-glucosamine = a UDP-3-O-[(3R)-3-hydroxyacyl]-N-acetyl-alpha-D-glucosamine + holo-[ACP]</text>
        <dbReference type="Rhea" id="RHEA:67812"/>
        <dbReference type="Rhea" id="RHEA-COMP:9685"/>
        <dbReference type="Rhea" id="RHEA-COMP:9945"/>
        <dbReference type="ChEBI" id="CHEBI:57705"/>
        <dbReference type="ChEBI" id="CHEBI:64479"/>
        <dbReference type="ChEBI" id="CHEBI:78827"/>
        <dbReference type="ChEBI" id="CHEBI:173225"/>
        <dbReference type="EC" id="2.3.1.129"/>
    </reaction>
</comment>
<comment type="pathway">
    <text evidence="3">Glycolipid biosynthesis; lipid IV(A) biosynthesis; lipid IV(A) from (3R)-3-hydroxytetradecanoyl-[acyl-carrier-protein] and UDP-N-acetyl-alpha-D-glucosamine: step 1/6.</text>
</comment>
<comment type="subunit">
    <text evidence="4">Homotrimer.</text>
</comment>
<comment type="subcellular location">
    <subcellularLocation>
        <location evidence="3">Mitochondrion</location>
    </subcellularLocation>
</comment>
<comment type="alternative products">
    <event type="alternative splicing"/>
    <isoform>
        <id>Q9SU91-1</id>
        <name>1</name>
        <sequence type="displayed"/>
    </isoform>
    <isoform>
        <id>Q9SU91-2</id>
        <name>2</name>
        <sequence type="described" ref="VSP_045743"/>
    </isoform>
</comment>
<comment type="disruption phenotype">
    <text evidence="3">No visible phenotype under normal growth conditions, but plants lacking LPXA accumulate very low levels of 2,3-diacylglucosamine-1-phosphate.</text>
</comment>
<comment type="similarity">
    <text evidence="6">Belongs to the transferase hexapeptide repeat family. LpxA subfamily.</text>
</comment>
<evidence type="ECO:0000250" key="1"/>
<evidence type="ECO:0000255" key="2"/>
<evidence type="ECO:0000269" key="3">
    <source>
    </source>
</evidence>
<evidence type="ECO:0000269" key="4">
    <source>
    </source>
</evidence>
<evidence type="ECO:0000303" key="5">
    <source>
    </source>
</evidence>
<evidence type="ECO:0000305" key="6"/>
<evidence type="ECO:0007829" key="7">
    <source>
        <dbReference type="PDB" id="3T57"/>
    </source>
</evidence>
<name>LPXA_ARATH</name>
<gene>
    <name type="primary">LPXA</name>
    <name type="ordered locus">At4g29540</name>
    <name type="ORF">T16L4.50</name>
</gene>
<protein>
    <recommendedName>
        <fullName>Probable acyl-[acyl-carrier-protein]--UDP-N-acetylglucosamine O-acyltransferase, mitochondrial</fullName>
        <shortName>UDP-N-acetylglucosamine acyltransferase</shortName>
        <ecNumber>2.3.1.129</ecNumber>
    </recommendedName>
    <alternativeName>
        <fullName>Protein LIPID X A</fullName>
        <shortName>AtLpxA</shortName>
    </alternativeName>
</protein>
<dbReference type="EC" id="2.3.1.129"/>
<dbReference type="EMBL" id="AL079344">
    <property type="protein sequence ID" value="CAB45314.1"/>
    <property type="molecule type" value="Genomic_DNA"/>
</dbReference>
<dbReference type="EMBL" id="AL161575">
    <property type="protein sequence ID" value="CAB79712.1"/>
    <property type="molecule type" value="Genomic_DNA"/>
</dbReference>
<dbReference type="EMBL" id="CP002687">
    <property type="protein sequence ID" value="AEE85641.1"/>
    <property type="molecule type" value="Genomic_DNA"/>
</dbReference>
<dbReference type="EMBL" id="CP002687">
    <property type="protein sequence ID" value="AEE85642.1"/>
    <property type="molecule type" value="Genomic_DNA"/>
</dbReference>
<dbReference type="EMBL" id="AY142528">
    <property type="protein sequence ID" value="AAN13071.1"/>
    <property type="molecule type" value="mRNA"/>
</dbReference>
<dbReference type="EMBL" id="AK175463">
    <property type="protein sequence ID" value="BAD43226.1"/>
    <property type="molecule type" value="mRNA"/>
</dbReference>
<dbReference type="PIR" id="T09917">
    <property type="entry name" value="T09917"/>
</dbReference>
<dbReference type="RefSeq" id="NP_001031749.1">
    <molecule id="Q9SU91-1"/>
    <property type="nucleotide sequence ID" value="NM_001036672.2"/>
</dbReference>
<dbReference type="RefSeq" id="NP_194683.2">
    <molecule id="Q9SU91-2"/>
    <property type="nucleotide sequence ID" value="NM_119099.3"/>
</dbReference>
<dbReference type="PDB" id="3T57">
    <property type="method" value="X-ray"/>
    <property type="resolution" value="2.10 A"/>
    <property type="chains" value="A=33-336"/>
</dbReference>
<dbReference type="PDBsum" id="3T57"/>
<dbReference type="SMR" id="Q9SU91"/>
<dbReference type="BioGRID" id="14362">
    <property type="interactions" value="1"/>
</dbReference>
<dbReference type="FunCoup" id="Q9SU91">
    <property type="interactions" value="81"/>
</dbReference>
<dbReference type="STRING" id="3702.Q9SU91"/>
<dbReference type="iPTMnet" id="Q9SU91"/>
<dbReference type="PaxDb" id="3702-AT4G29540.2"/>
<dbReference type="EnsemblPlants" id="AT4G29540.1">
    <molecule id="Q9SU91-2"/>
    <property type="protein sequence ID" value="AT4G29540.1"/>
    <property type="gene ID" value="AT4G29540"/>
</dbReference>
<dbReference type="EnsemblPlants" id="AT4G29540.2">
    <molecule id="Q9SU91-1"/>
    <property type="protein sequence ID" value="AT4G29540.2"/>
    <property type="gene ID" value="AT4G29540"/>
</dbReference>
<dbReference type="GeneID" id="829075"/>
<dbReference type="Gramene" id="AT4G29540.1">
    <molecule id="Q9SU91-2"/>
    <property type="protein sequence ID" value="AT4G29540.1"/>
    <property type="gene ID" value="AT4G29540"/>
</dbReference>
<dbReference type="Gramene" id="AT4G29540.2">
    <molecule id="Q9SU91-1"/>
    <property type="protein sequence ID" value="AT4G29540.2"/>
    <property type="gene ID" value="AT4G29540"/>
</dbReference>
<dbReference type="KEGG" id="ath:AT4G29540"/>
<dbReference type="Araport" id="AT4G29540"/>
<dbReference type="TAIR" id="AT4G29540">
    <property type="gene designation" value="LPXA"/>
</dbReference>
<dbReference type="eggNOG" id="ENOG502QRGY">
    <property type="taxonomic scope" value="Eukaryota"/>
</dbReference>
<dbReference type="HOGENOM" id="CLU_061249_0_0_1"/>
<dbReference type="InParanoid" id="Q9SU91"/>
<dbReference type="OMA" id="ECVTINR"/>
<dbReference type="OrthoDB" id="25818at2759"/>
<dbReference type="PhylomeDB" id="Q9SU91"/>
<dbReference type="BioCyc" id="ARA:AT4G29540-MONOMER"/>
<dbReference type="BRENDA" id="2.3.1.129">
    <property type="organism ID" value="399"/>
</dbReference>
<dbReference type="UniPathway" id="UPA00359">
    <property type="reaction ID" value="UER00477"/>
</dbReference>
<dbReference type="EvolutionaryTrace" id="Q9SU91"/>
<dbReference type="PRO" id="PR:Q9SU91"/>
<dbReference type="Proteomes" id="UP000006548">
    <property type="component" value="Chromosome 4"/>
</dbReference>
<dbReference type="ExpressionAtlas" id="Q9SU91">
    <property type="expression patterns" value="baseline and differential"/>
</dbReference>
<dbReference type="GO" id="GO:0016020">
    <property type="term" value="C:membrane"/>
    <property type="evidence" value="ECO:0007669"/>
    <property type="project" value="GOC"/>
</dbReference>
<dbReference type="GO" id="GO:0005739">
    <property type="term" value="C:mitochondrion"/>
    <property type="evidence" value="ECO:0000314"/>
    <property type="project" value="TAIR"/>
</dbReference>
<dbReference type="GO" id="GO:0008780">
    <property type="term" value="F:acyl-[acyl-carrier-protein]-UDP-N-acetylglucosamine O-acyltransferase activity"/>
    <property type="evidence" value="ECO:0000314"/>
    <property type="project" value="TAIR"/>
</dbReference>
<dbReference type="GO" id="GO:0009245">
    <property type="term" value="P:lipid A biosynthetic process"/>
    <property type="evidence" value="ECO:0007669"/>
    <property type="project" value="UniProtKB-KW"/>
</dbReference>
<dbReference type="GO" id="GO:2001289">
    <property type="term" value="P:lipid X metabolic process"/>
    <property type="evidence" value="ECO:0000315"/>
    <property type="project" value="TAIR"/>
</dbReference>
<dbReference type="CDD" id="cd03351">
    <property type="entry name" value="LbH_UDP-GlcNAc_AT"/>
    <property type="match status" value="1"/>
</dbReference>
<dbReference type="FunFam" id="1.20.1180.10:FF:000002">
    <property type="entry name" value="Probable acyl-[acyl-carrier-protein]--UDP-N-acetylglucosamine O-acyltransferase, mitochondrial"/>
    <property type="match status" value="1"/>
</dbReference>
<dbReference type="Gene3D" id="2.160.10.10">
    <property type="entry name" value="Hexapeptide repeat proteins"/>
    <property type="match status" value="1"/>
</dbReference>
<dbReference type="Gene3D" id="1.20.1180.10">
    <property type="entry name" value="Udp N-acetylglucosamine O-acyltransferase, C-terminal domain"/>
    <property type="match status" value="1"/>
</dbReference>
<dbReference type="InterPro" id="IPR029098">
    <property type="entry name" value="Acetyltransf_C"/>
</dbReference>
<dbReference type="InterPro" id="IPR037157">
    <property type="entry name" value="Acetyltransf_C_sf"/>
</dbReference>
<dbReference type="InterPro" id="IPR001451">
    <property type="entry name" value="Hexapep"/>
</dbReference>
<dbReference type="InterPro" id="IPR010137">
    <property type="entry name" value="Lipid_A_LpxA"/>
</dbReference>
<dbReference type="InterPro" id="IPR011004">
    <property type="entry name" value="Trimer_LpxA-like_sf"/>
</dbReference>
<dbReference type="NCBIfam" id="NF003657">
    <property type="entry name" value="PRK05289.1"/>
    <property type="match status" value="1"/>
</dbReference>
<dbReference type="PANTHER" id="PTHR43480">
    <property type="entry name" value="ACYL-[ACYL-CARRIER-PROTEIN]--UDP-N-ACETYLGLUCOSAMINE O-ACYLTRANSFERASE"/>
    <property type="match status" value="1"/>
</dbReference>
<dbReference type="PANTHER" id="PTHR43480:SF1">
    <property type="entry name" value="ACYL-[ACYL-CARRIER-PROTEIN]--UDP-N-ACETYLGLUCOSAMINE O-ACYLTRANSFERASE, MITOCHONDRIAL-RELATED"/>
    <property type="match status" value="1"/>
</dbReference>
<dbReference type="Pfam" id="PF13720">
    <property type="entry name" value="Acetyltransf_11"/>
    <property type="match status" value="1"/>
</dbReference>
<dbReference type="Pfam" id="PF00132">
    <property type="entry name" value="Hexapep"/>
    <property type="match status" value="2"/>
</dbReference>
<dbReference type="SUPFAM" id="SSF51161">
    <property type="entry name" value="Trimeric LpxA-like enzymes"/>
    <property type="match status" value="1"/>
</dbReference>
<reference key="1">
    <citation type="journal article" date="1999" name="Nature">
        <title>Sequence and analysis of chromosome 4 of the plant Arabidopsis thaliana.</title>
        <authorList>
            <person name="Mayer K.F.X."/>
            <person name="Schueller C."/>
            <person name="Wambutt R."/>
            <person name="Murphy G."/>
            <person name="Volckaert G."/>
            <person name="Pohl T."/>
            <person name="Duesterhoeft A."/>
            <person name="Stiekema W."/>
            <person name="Entian K.-D."/>
            <person name="Terryn N."/>
            <person name="Harris B."/>
            <person name="Ansorge W."/>
            <person name="Brandt P."/>
            <person name="Grivell L.A."/>
            <person name="Rieger M."/>
            <person name="Weichselgartner M."/>
            <person name="de Simone V."/>
            <person name="Obermaier B."/>
            <person name="Mache R."/>
            <person name="Mueller M."/>
            <person name="Kreis M."/>
            <person name="Delseny M."/>
            <person name="Puigdomenech P."/>
            <person name="Watson M."/>
            <person name="Schmidtheini T."/>
            <person name="Reichert B."/>
            <person name="Portetelle D."/>
            <person name="Perez-Alonso M."/>
            <person name="Boutry M."/>
            <person name="Bancroft I."/>
            <person name="Vos P."/>
            <person name="Hoheisel J."/>
            <person name="Zimmermann W."/>
            <person name="Wedler H."/>
            <person name="Ridley P."/>
            <person name="Langham S.-A."/>
            <person name="McCullagh B."/>
            <person name="Bilham L."/>
            <person name="Robben J."/>
            <person name="van der Schueren J."/>
            <person name="Grymonprez B."/>
            <person name="Chuang Y.-J."/>
            <person name="Vandenbussche F."/>
            <person name="Braeken M."/>
            <person name="Weltjens I."/>
            <person name="Voet M."/>
            <person name="Bastiaens I."/>
            <person name="Aert R."/>
            <person name="Defoor E."/>
            <person name="Weitzenegger T."/>
            <person name="Bothe G."/>
            <person name="Ramsperger U."/>
            <person name="Hilbert H."/>
            <person name="Braun M."/>
            <person name="Holzer E."/>
            <person name="Brandt A."/>
            <person name="Peters S."/>
            <person name="van Staveren M."/>
            <person name="Dirkse W."/>
            <person name="Mooijman P."/>
            <person name="Klein Lankhorst R."/>
            <person name="Rose M."/>
            <person name="Hauf J."/>
            <person name="Koetter P."/>
            <person name="Berneiser S."/>
            <person name="Hempel S."/>
            <person name="Feldpausch M."/>
            <person name="Lamberth S."/>
            <person name="Van den Daele H."/>
            <person name="De Keyser A."/>
            <person name="Buysshaert C."/>
            <person name="Gielen J."/>
            <person name="Villarroel R."/>
            <person name="De Clercq R."/>
            <person name="van Montagu M."/>
            <person name="Rogers J."/>
            <person name="Cronin A."/>
            <person name="Quail M.A."/>
            <person name="Bray-Allen S."/>
            <person name="Clark L."/>
            <person name="Doggett J."/>
            <person name="Hall S."/>
            <person name="Kay M."/>
            <person name="Lennard N."/>
            <person name="McLay K."/>
            <person name="Mayes R."/>
            <person name="Pettett A."/>
            <person name="Rajandream M.A."/>
            <person name="Lyne M."/>
            <person name="Benes V."/>
            <person name="Rechmann S."/>
            <person name="Borkova D."/>
            <person name="Bloecker H."/>
            <person name="Scharfe M."/>
            <person name="Grimm M."/>
            <person name="Loehnert T.-H."/>
            <person name="Dose S."/>
            <person name="de Haan M."/>
            <person name="Maarse A.C."/>
            <person name="Schaefer M."/>
            <person name="Mueller-Auer S."/>
            <person name="Gabel C."/>
            <person name="Fuchs M."/>
            <person name="Fartmann B."/>
            <person name="Granderath K."/>
            <person name="Dauner D."/>
            <person name="Herzl A."/>
            <person name="Neumann S."/>
            <person name="Argiriou A."/>
            <person name="Vitale D."/>
            <person name="Liguori R."/>
            <person name="Piravandi E."/>
            <person name="Massenet O."/>
            <person name="Quigley F."/>
            <person name="Clabauld G."/>
            <person name="Muendlein A."/>
            <person name="Felber R."/>
            <person name="Schnabl S."/>
            <person name="Hiller R."/>
            <person name="Schmidt W."/>
            <person name="Lecharny A."/>
            <person name="Aubourg S."/>
            <person name="Chefdor F."/>
            <person name="Cooke R."/>
            <person name="Berger C."/>
            <person name="Monfort A."/>
            <person name="Casacuberta E."/>
            <person name="Gibbons T."/>
            <person name="Weber N."/>
            <person name="Vandenbol M."/>
            <person name="Bargues M."/>
            <person name="Terol J."/>
            <person name="Torres A."/>
            <person name="Perez-Perez A."/>
            <person name="Purnelle B."/>
            <person name="Bent E."/>
            <person name="Johnson S."/>
            <person name="Tacon D."/>
            <person name="Jesse T."/>
            <person name="Heijnen L."/>
            <person name="Schwarz S."/>
            <person name="Scholler P."/>
            <person name="Heber S."/>
            <person name="Francs P."/>
            <person name="Bielke C."/>
            <person name="Frishman D."/>
            <person name="Haase D."/>
            <person name="Lemcke K."/>
            <person name="Mewes H.-W."/>
            <person name="Stocker S."/>
            <person name="Zaccaria P."/>
            <person name="Bevan M."/>
            <person name="Wilson R.K."/>
            <person name="de la Bastide M."/>
            <person name="Habermann K."/>
            <person name="Parnell L."/>
            <person name="Dedhia N."/>
            <person name="Gnoj L."/>
            <person name="Schutz K."/>
            <person name="Huang E."/>
            <person name="Spiegel L."/>
            <person name="Sekhon M."/>
            <person name="Murray J."/>
            <person name="Sheet P."/>
            <person name="Cordes M."/>
            <person name="Abu-Threideh J."/>
            <person name="Stoneking T."/>
            <person name="Kalicki J."/>
            <person name="Graves T."/>
            <person name="Harmon G."/>
            <person name="Edwards J."/>
            <person name="Latreille P."/>
            <person name="Courtney L."/>
            <person name="Cloud J."/>
            <person name="Abbott A."/>
            <person name="Scott K."/>
            <person name="Johnson D."/>
            <person name="Minx P."/>
            <person name="Bentley D."/>
            <person name="Fulton B."/>
            <person name="Miller N."/>
            <person name="Greco T."/>
            <person name="Kemp K."/>
            <person name="Kramer J."/>
            <person name="Fulton L."/>
            <person name="Mardis E."/>
            <person name="Dante M."/>
            <person name="Pepin K."/>
            <person name="Hillier L.W."/>
            <person name="Nelson J."/>
            <person name="Spieth J."/>
            <person name="Ryan E."/>
            <person name="Andrews S."/>
            <person name="Geisel C."/>
            <person name="Layman D."/>
            <person name="Du H."/>
            <person name="Ali J."/>
            <person name="Berghoff A."/>
            <person name="Jones K."/>
            <person name="Drone K."/>
            <person name="Cotton M."/>
            <person name="Joshu C."/>
            <person name="Antonoiu B."/>
            <person name="Zidanic M."/>
            <person name="Strong C."/>
            <person name="Sun H."/>
            <person name="Lamar B."/>
            <person name="Yordan C."/>
            <person name="Ma P."/>
            <person name="Zhong J."/>
            <person name="Preston R."/>
            <person name="Vil D."/>
            <person name="Shekher M."/>
            <person name="Matero A."/>
            <person name="Shah R."/>
            <person name="Swaby I.K."/>
            <person name="O'Shaughnessy A."/>
            <person name="Rodriguez M."/>
            <person name="Hoffman J."/>
            <person name="Till S."/>
            <person name="Granat S."/>
            <person name="Shohdy N."/>
            <person name="Hasegawa A."/>
            <person name="Hameed A."/>
            <person name="Lodhi M."/>
            <person name="Johnson A."/>
            <person name="Chen E."/>
            <person name="Marra M.A."/>
            <person name="Martienssen R."/>
            <person name="McCombie W.R."/>
        </authorList>
    </citation>
    <scope>NUCLEOTIDE SEQUENCE [LARGE SCALE GENOMIC DNA]</scope>
    <source>
        <strain>cv. Columbia</strain>
    </source>
</reference>
<reference key="2">
    <citation type="journal article" date="2017" name="Plant J.">
        <title>Araport11: a complete reannotation of the Arabidopsis thaliana reference genome.</title>
        <authorList>
            <person name="Cheng C.Y."/>
            <person name="Krishnakumar V."/>
            <person name="Chan A.P."/>
            <person name="Thibaud-Nissen F."/>
            <person name="Schobel S."/>
            <person name="Town C.D."/>
        </authorList>
    </citation>
    <scope>GENOME REANNOTATION</scope>
    <source>
        <strain>cv. Columbia</strain>
    </source>
</reference>
<reference key="3">
    <citation type="journal article" date="2003" name="Science">
        <title>Empirical analysis of transcriptional activity in the Arabidopsis genome.</title>
        <authorList>
            <person name="Yamada K."/>
            <person name="Lim J."/>
            <person name="Dale J.M."/>
            <person name="Chen H."/>
            <person name="Shinn P."/>
            <person name="Palm C.J."/>
            <person name="Southwick A.M."/>
            <person name="Wu H.C."/>
            <person name="Kim C.J."/>
            <person name="Nguyen M."/>
            <person name="Pham P.K."/>
            <person name="Cheuk R.F."/>
            <person name="Karlin-Newmann G."/>
            <person name="Liu S.X."/>
            <person name="Lam B."/>
            <person name="Sakano H."/>
            <person name="Wu T."/>
            <person name="Yu G."/>
            <person name="Miranda M."/>
            <person name="Quach H.L."/>
            <person name="Tripp M."/>
            <person name="Chang C.H."/>
            <person name="Lee J.M."/>
            <person name="Toriumi M.J."/>
            <person name="Chan M.M."/>
            <person name="Tang C.C."/>
            <person name="Onodera C.S."/>
            <person name="Deng J.M."/>
            <person name="Akiyama K."/>
            <person name="Ansari Y."/>
            <person name="Arakawa T."/>
            <person name="Banh J."/>
            <person name="Banno F."/>
            <person name="Bowser L."/>
            <person name="Brooks S.Y."/>
            <person name="Carninci P."/>
            <person name="Chao Q."/>
            <person name="Choy N."/>
            <person name="Enju A."/>
            <person name="Goldsmith A.D."/>
            <person name="Gurjal M."/>
            <person name="Hansen N.F."/>
            <person name="Hayashizaki Y."/>
            <person name="Johnson-Hopson C."/>
            <person name="Hsuan V.W."/>
            <person name="Iida K."/>
            <person name="Karnes M."/>
            <person name="Khan S."/>
            <person name="Koesema E."/>
            <person name="Ishida J."/>
            <person name="Jiang P.X."/>
            <person name="Jones T."/>
            <person name="Kawai J."/>
            <person name="Kamiya A."/>
            <person name="Meyers C."/>
            <person name="Nakajima M."/>
            <person name="Narusaka M."/>
            <person name="Seki M."/>
            <person name="Sakurai T."/>
            <person name="Satou M."/>
            <person name="Tamse R."/>
            <person name="Vaysberg M."/>
            <person name="Wallender E.K."/>
            <person name="Wong C."/>
            <person name="Yamamura Y."/>
            <person name="Yuan S."/>
            <person name="Shinozaki K."/>
            <person name="Davis R.W."/>
            <person name="Theologis A."/>
            <person name="Ecker J.R."/>
        </authorList>
    </citation>
    <scope>NUCLEOTIDE SEQUENCE [LARGE SCALE MRNA] (ISOFORM 2)</scope>
    <source>
        <strain>cv. Columbia</strain>
    </source>
</reference>
<reference key="4">
    <citation type="submission" date="2004-09" db="EMBL/GenBank/DDBJ databases">
        <title>Large-scale analysis of RIKEN Arabidopsis full-length (RAFL) cDNAs.</title>
        <authorList>
            <person name="Totoki Y."/>
            <person name="Seki M."/>
            <person name="Ishida J."/>
            <person name="Nakajima M."/>
            <person name="Enju A."/>
            <person name="Kamiya A."/>
            <person name="Narusaka M."/>
            <person name="Shin-i T."/>
            <person name="Nakagawa M."/>
            <person name="Sakamoto N."/>
            <person name="Oishi K."/>
            <person name="Kohara Y."/>
            <person name="Kobayashi M."/>
            <person name="Toyoda A."/>
            <person name="Sakaki Y."/>
            <person name="Sakurai T."/>
            <person name="Iida K."/>
            <person name="Akiyama K."/>
            <person name="Satou M."/>
            <person name="Toyoda T."/>
            <person name="Konagaya A."/>
            <person name="Carninci P."/>
            <person name="Kawai J."/>
            <person name="Hayashizaki Y."/>
            <person name="Shinozaki K."/>
        </authorList>
    </citation>
    <scope>NUCLEOTIDE SEQUENCE [LARGE SCALE MRNA] (ISOFORM 1)</scope>
    <source>
        <strain>cv. Columbia</strain>
    </source>
</reference>
<reference key="5">
    <citation type="journal article" date="2011" name="Proc. Natl. Acad. Sci. U.S.A.">
        <title>Pathway for lipid A biosynthesis in Arabidopsis thaliana resembling that of Escherichia coli.</title>
        <authorList>
            <person name="Li C."/>
            <person name="Guan Z."/>
            <person name="Liu D."/>
            <person name="Raetz C.R."/>
        </authorList>
    </citation>
    <scope>PATHWAY</scope>
    <scope>SUBCELLULAR LOCATION</scope>
    <scope>GENE FAMILY</scope>
    <scope>NOMENCLATURE</scope>
    <scope>DISRUPTION PHENOTYPE</scope>
</reference>
<reference key="6">
    <citation type="journal article" date="2012" name="Biochemistry">
        <title>Activity and crystal structure of Arabidopsis thaliana UDP-N-acetylglucosamine acyltransferase.</title>
        <authorList>
            <person name="Joo S.H."/>
            <person name="Chung H.S."/>
            <person name="Raetz C.R."/>
            <person name="Garrett T.A."/>
        </authorList>
    </citation>
    <scope>X-RAY CRYSTALLOGRAPHY (2.10 ANGSTROMS) OF 33-336</scope>
    <scope>FUNCTION</scope>
    <scope>CATALYTIC ACTIVITY</scope>
    <scope>SUBUNIT</scope>
</reference>
<sequence length="336" mass="36714">MISLLKAREKLLSPLVSSTIRRLSSSLSYSREDSRDSEVLIHPSAVVHPNAVIGKGVSVGPYCTIGSSVKLGNGCKLYPSSHVFGNTELGESCVLMTGAVVGDELPGYTFIGCNNIIGHHAVVGVKCQDLKYKHGDECFLCIGNNNEIREFCSIHRSSKPSDKTVIGDNNLIMGSCHIAHDCKIGDRNIFANNTLLAGHVVVEDNTHTAGASVVHQFCHIGSFAFIGGGSVVSQDVPKYMMVAGERAELRGLNLEGLRRNGFTMSEMKSLRAAYRKIFMSTETVSLSFEERLTELEQDQELYSVPAVSAMLQSIRDSFTESRRGICKFRQWLDSTT</sequence>
<keyword id="KW-0002">3D-structure</keyword>
<keyword id="KW-0012">Acyltransferase</keyword>
<keyword id="KW-0025">Alternative splicing</keyword>
<keyword id="KW-0441">Lipid A biosynthesis</keyword>
<keyword id="KW-0444">Lipid biosynthesis</keyword>
<keyword id="KW-0443">Lipid metabolism</keyword>
<keyword id="KW-0496">Mitochondrion</keyword>
<keyword id="KW-1185">Reference proteome</keyword>
<keyword id="KW-0808">Transferase</keyword>
<keyword id="KW-0809">Transit peptide</keyword>